<dbReference type="EC" id="7.1.1.-" evidence="1"/>
<dbReference type="EMBL" id="CP000854">
    <property type="protein sequence ID" value="ACC39932.1"/>
    <property type="molecule type" value="Genomic_DNA"/>
</dbReference>
<dbReference type="RefSeq" id="WP_012393325.1">
    <property type="nucleotide sequence ID" value="NC_010612.1"/>
</dbReference>
<dbReference type="SMR" id="B2HGE6"/>
<dbReference type="STRING" id="216594.MMAR_1481"/>
<dbReference type="GeneID" id="34342119"/>
<dbReference type="KEGG" id="mmi:MMAR_1481"/>
<dbReference type="eggNOG" id="COG0852">
    <property type="taxonomic scope" value="Bacteria"/>
</dbReference>
<dbReference type="HOGENOM" id="CLU_042628_4_0_11"/>
<dbReference type="OrthoDB" id="9803286at2"/>
<dbReference type="Proteomes" id="UP000001190">
    <property type="component" value="Chromosome"/>
</dbReference>
<dbReference type="GO" id="GO:0005886">
    <property type="term" value="C:plasma membrane"/>
    <property type="evidence" value="ECO:0007669"/>
    <property type="project" value="UniProtKB-SubCell"/>
</dbReference>
<dbReference type="GO" id="GO:0008137">
    <property type="term" value="F:NADH dehydrogenase (ubiquinone) activity"/>
    <property type="evidence" value="ECO:0007669"/>
    <property type="project" value="InterPro"/>
</dbReference>
<dbReference type="GO" id="GO:0050136">
    <property type="term" value="F:NADH:ubiquinone reductase (non-electrogenic) activity"/>
    <property type="evidence" value="ECO:0007669"/>
    <property type="project" value="UniProtKB-UniRule"/>
</dbReference>
<dbReference type="GO" id="GO:0048038">
    <property type="term" value="F:quinone binding"/>
    <property type="evidence" value="ECO:0007669"/>
    <property type="project" value="UniProtKB-KW"/>
</dbReference>
<dbReference type="FunFam" id="3.30.460.80:FF:000006">
    <property type="entry name" value="NADH-quinone oxidoreductase subunit C"/>
    <property type="match status" value="1"/>
</dbReference>
<dbReference type="Gene3D" id="3.30.460.80">
    <property type="entry name" value="NADH:ubiquinone oxidoreductase, 30kDa subunit"/>
    <property type="match status" value="1"/>
</dbReference>
<dbReference type="HAMAP" id="MF_01357">
    <property type="entry name" value="NDH1_NuoC"/>
    <property type="match status" value="1"/>
</dbReference>
<dbReference type="InterPro" id="IPR010218">
    <property type="entry name" value="NADH_DH_suC"/>
</dbReference>
<dbReference type="InterPro" id="IPR037232">
    <property type="entry name" value="NADH_quin_OxRdtase_su_C/D-like"/>
</dbReference>
<dbReference type="InterPro" id="IPR001268">
    <property type="entry name" value="NADH_UbQ_OxRdtase_30kDa_su"/>
</dbReference>
<dbReference type="NCBIfam" id="TIGR01961">
    <property type="entry name" value="NuoC_fam"/>
    <property type="match status" value="1"/>
</dbReference>
<dbReference type="NCBIfam" id="NF005856">
    <property type="entry name" value="PRK07785.1"/>
    <property type="match status" value="1"/>
</dbReference>
<dbReference type="PANTHER" id="PTHR10884:SF14">
    <property type="entry name" value="NADH DEHYDROGENASE [UBIQUINONE] IRON-SULFUR PROTEIN 3, MITOCHONDRIAL"/>
    <property type="match status" value="1"/>
</dbReference>
<dbReference type="PANTHER" id="PTHR10884">
    <property type="entry name" value="NADH DEHYDROGENASE UBIQUINONE IRON-SULFUR PROTEIN 3"/>
    <property type="match status" value="1"/>
</dbReference>
<dbReference type="Pfam" id="PF00329">
    <property type="entry name" value="Complex1_30kDa"/>
    <property type="match status" value="1"/>
</dbReference>
<dbReference type="SUPFAM" id="SSF143243">
    <property type="entry name" value="Nqo5-like"/>
    <property type="match status" value="1"/>
</dbReference>
<evidence type="ECO:0000255" key="1">
    <source>
        <dbReference type="HAMAP-Rule" id="MF_01357"/>
    </source>
</evidence>
<evidence type="ECO:0000256" key="2">
    <source>
        <dbReference type="SAM" id="MobiDB-lite"/>
    </source>
</evidence>
<proteinExistence type="inferred from homology"/>
<comment type="function">
    <text evidence="1">NDH-1 shuttles electrons from NADH, via FMN and iron-sulfur (Fe-S) centers, to quinones in the respiratory chain. The immediate electron acceptor for the enzyme in this species is believed to be a menaquinone. Couples the redox reaction to proton translocation (for every two electrons transferred, four hydrogen ions are translocated across the cytoplasmic membrane), and thus conserves the redox energy in a proton gradient.</text>
</comment>
<comment type="catalytic activity">
    <reaction evidence="1">
        <text>a quinone + NADH + 5 H(+)(in) = a quinol + NAD(+) + 4 H(+)(out)</text>
        <dbReference type="Rhea" id="RHEA:57888"/>
        <dbReference type="ChEBI" id="CHEBI:15378"/>
        <dbReference type="ChEBI" id="CHEBI:24646"/>
        <dbReference type="ChEBI" id="CHEBI:57540"/>
        <dbReference type="ChEBI" id="CHEBI:57945"/>
        <dbReference type="ChEBI" id="CHEBI:132124"/>
    </reaction>
</comment>
<comment type="subunit">
    <text evidence="1">NDH-1 is composed of 14 different subunits. Subunits NuoB, C, D, E, F, and G constitute the peripheral sector of the complex.</text>
</comment>
<comment type="subcellular location">
    <subcellularLocation>
        <location evidence="1">Cell membrane</location>
        <topology evidence="1">Peripheral membrane protein</topology>
        <orientation evidence="1">Cytoplasmic side</orientation>
    </subcellularLocation>
</comment>
<comment type="similarity">
    <text evidence="1">Belongs to the complex I 30 kDa subunit family.</text>
</comment>
<reference key="1">
    <citation type="journal article" date="2008" name="Genome Res.">
        <title>Insights from the complete genome sequence of Mycobacterium marinum on the evolution of Mycobacterium tuberculosis.</title>
        <authorList>
            <person name="Stinear T.P."/>
            <person name="Seemann T."/>
            <person name="Harrison P.F."/>
            <person name="Jenkin G.A."/>
            <person name="Davies J.K."/>
            <person name="Johnson P.D."/>
            <person name="Abdellah Z."/>
            <person name="Arrowsmith C."/>
            <person name="Chillingworth T."/>
            <person name="Churcher C."/>
            <person name="Clarke K."/>
            <person name="Cronin A."/>
            <person name="Davis P."/>
            <person name="Goodhead I."/>
            <person name="Holroyd N."/>
            <person name="Jagels K."/>
            <person name="Lord A."/>
            <person name="Moule S."/>
            <person name="Mungall K."/>
            <person name="Norbertczak H."/>
            <person name="Quail M.A."/>
            <person name="Rabbinowitsch E."/>
            <person name="Walker D."/>
            <person name="White B."/>
            <person name="Whitehead S."/>
            <person name="Small P.L."/>
            <person name="Brosch R."/>
            <person name="Ramakrishnan L."/>
            <person name="Fischbach M.A."/>
            <person name="Parkhill J."/>
            <person name="Cole S.T."/>
        </authorList>
    </citation>
    <scope>NUCLEOTIDE SEQUENCE [LARGE SCALE GENOMIC DNA]</scope>
    <source>
        <strain>ATCC BAA-535 / M</strain>
    </source>
</reference>
<name>NUOC_MYCMM</name>
<keyword id="KW-1003">Cell membrane</keyword>
<keyword id="KW-0472">Membrane</keyword>
<keyword id="KW-0520">NAD</keyword>
<keyword id="KW-0874">Quinone</keyword>
<keyword id="KW-1185">Reference proteome</keyword>
<keyword id="KW-1278">Translocase</keyword>
<keyword id="KW-0813">Transport</keyword>
<sequence>MSSPDQNPSDAAGQTGSSNEEVVDVRRGMFGVKGTGDTSGYGRLVREIVLPGSSPRPYGFYFDEIADRLAEALNRDGVEFEDAIEKVVVYRNELTLHVRREALLRVAQSLRDEPELRFELCLGVNGVHYPHETGRELHAVYPLQSITHNRRLRLEVSAPDSDPHIPSLYAVYPTNDWHERETYDFFGIIFDGHPSLTRIEMPDDWQGHPQRKDYPLGGIPVEYKGAQIPPPDERRGYN</sequence>
<accession>B2HGE6</accession>
<organism>
    <name type="scientific">Mycobacterium marinum (strain ATCC BAA-535 / M)</name>
    <dbReference type="NCBI Taxonomy" id="216594"/>
    <lineage>
        <taxon>Bacteria</taxon>
        <taxon>Bacillati</taxon>
        <taxon>Actinomycetota</taxon>
        <taxon>Actinomycetes</taxon>
        <taxon>Mycobacteriales</taxon>
        <taxon>Mycobacteriaceae</taxon>
        <taxon>Mycobacterium</taxon>
        <taxon>Mycobacterium ulcerans group</taxon>
    </lineage>
</organism>
<feature type="chain" id="PRO_0000358135" description="NADH-quinone oxidoreductase subunit C">
    <location>
        <begin position="1"/>
        <end position="238"/>
    </location>
</feature>
<feature type="region of interest" description="Disordered" evidence="2">
    <location>
        <begin position="1"/>
        <end position="20"/>
    </location>
</feature>
<gene>
    <name evidence="1" type="primary">nuoC</name>
    <name type="ordered locus">MMAR_1481</name>
</gene>
<protein>
    <recommendedName>
        <fullName evidence="1">NADH-quinone oxidoreductase subunit C</fullName>
        <ecNumber evidence="1">7.1.1.-</ecNumber>
    </recommendedName>
    <alternativeName>
        <fullName evidence="1">NADH dehydrogenase I subunit C</fullName>
    </alternativeName>
    <alternativeName>
        <fullName evidence="1">NDH-1 subunit C</fullName>
    </alternativeName>
</protein>